<protein>
    <recommendedName>
        <fullName evidence="1">Splicing factor YJU2</fullName>
    </recommendedName>
    <alternativeName>
        <fullName>Complexed with cdc5 protein 16</fullName>
    </alternativeName>
    <alternativeName>
        <fullName>Pre-mRNA-splicing factor cwf16</fullName>
    </alternativeName>
</protein>
<proteinExistence type="evidence at protein level"/>
<gene>
    <name type="primary">cwf16</name>
    <name type="ORF">SPAC9.13c</name>
    <name type="ORF">SPAPJ735.01c</name>
</gene>
<accession>Q9P7C5</accession>
<accession>Q9UT15</accession>
<organism>
    <name type="scientific">Schizosaccharomyces pombe (strain 972 / ATCC 24843)</name>
    <name type="common">Fission yeast</name>
    <dbReference type="NCBI Taxonomy" id="284812"/>
    <lineage>
        <taxon>Eukaryota</taxon>
        <taxon>Fungi</taxon>
        <taxon>Dikarya</taxon>
        <taxon>Ascomycota</taxon>
        <taxon>Taphrinomycotina</taxon>
        <taxon>Schizosaccharomycetes</taxon>
        <taxon>Schizosaccharomycetales</taxon>
        <taxon>Schizosaccharomycetaceae</taxon>
        <taxon>Schizosaccharomyces</taxon>
    </lineage>
</organism>
<name>YJU2_SCHPO</name>
<feature type="chain" id="PRO_0000079612" description="Splicing factor YJU2">
    <location>
        <begin position="1"/>
        <end position="270"/>
    </location>
</feature>
<feature type="region of interest" description="Disordered" evidence="2">
    <location>
        <begin position="1"/>
        <end position="32"/>
    </location>
</feature>
<feature type="region of interest" description="Disordered" evidence="2">
    <location>
        <begin position="251"/>
        <end position="270"/>
    </location>
</feature>
<feature type="compositionally biased region" description="Basic residues" evidence="2">
    <location>
        <begin position="258"/>
        <end position="270"/>
    </location>
</feature>
<feature type="binding site" evidence="1">
    <location>
        <position position="48"/>
    </location>
    <ligand>
        <name>Zn(2+)</name>
        <dbReference type="ChEBI" id="CHEBI:29105"/>
    </ligand>
</feature>
<feature type="binding site" evidence="1">
    <location>
        <position position="51"/>
    </location>
    <ligand>
        <name>Zn(2+)</name>
        <dbReference type="ChEBI" id="CHEBI:29105"/>
    </ligand>
</feature>
<feature type="binding site" evidence="1">
    <location>
        <position position="84"/>
    </location>
    <ligand>
        <name>Zn(2+)</name>
        <dbReference type="ChEBI" id="CHEBI:29105"/>
    </ligand>
</feature>
<feature type="binding site" evidence="1">
    <location>
        <position position="87"/>
    </location>
    <ligand>
        <name>Zn(2+)</name>
        <dbReference type="ChEBI" id="CHEBI:29105"/>
    </ligand>
</feature>
<keyword id="KW-0479">Metal-binding</keyword>
<keyword id="KW-0507">mRNA processing</keyword>
<keyword id="KW-0508">mRNA splicing</keyword>
<keyword id="KW-0539">Nucleus</keyword>
<keyword id="KW-1185">Reference proteome</keyword>
<keyword id="KW-0747">Spliceosome</keyword>
<keyword id="KW-0862">Zinc</keyword>
<comment type="function">
    <text evidence="1">Part of the spliceosome which catalyzes two sequential transesterification reactions, first the excision of the non-coding intron from pre-mRNA and then the ligation of the coding exons to form the mature mRNA. Plays a role in stabilizing the structure of the spliceosome catalytic core and docking of the branch helix into the active site, producing 5'-exon and lariat intron-3'-intermediates.</text>
</comment>
<comment type="subunit">
    <text evidence="1 3">Component of the spliceosome (PubMed:11884590). Present in the activated B complex, the catalytically activated B* complex which catalyzes the branching, the catalytic step 1 C complex catalyzing the exon ligation, and the postcatalytic P complex containing the ligated exons (mRNA) and the excised lariat intron (By similarity). Belongs to the 40S cdc5-associated complex (or cwf complex), a spliceosome sub-complex reminiscent of a late-stage spliceosome composed of the U2, U5 and U6 snRNAs and at least brr2, cdc5, cwf2/prp3, cwf3/syf1, cwf4/syf3, cwf5/ecm2, spp42/cwf6, cwf7/spf27, cwf8, cwf9, cwf10, cwf11, cwf12, prp45/cwf13, cwf14, cwf15, cwf16, cwf17, cwf18, cwf19, cwf20, cwf21, cwf22, cwf23, cwf24, cwf25, cwf26, cyp7/cwf27, cwf28, cwf29/ist3, lea1, msl1, prp5/cwf1, prp10, prp12/sap130, prp17, prp22, sap61, sap62, sap114, sap145, slu7, smb1, smd1, smd3, smf1, smg1 and syf2 (PubMed:11884590).</text>
</comment>
<comment type="subcellular location">
    <subcellularLocation>
        <location evidence="1">Nucleus</location>
    </subcellularLocation>
</comment>
<comment type="similarity">
    <text evidence="1">Belongs to the CWC16 family. YJU2 subfamily.</text>
</comment>
<sequence length="270" mass="31653">MSERKVLNKYIPPDYDPSIRPPKKKKKFQGPNGGKLTVRLMTPFSMRCHTCGEYIYKGKKFNARKEKTGEKYFSIDILRFYIRCTRCAAEITFITDPKHADYAAESGASRNYEPWHEKRLQEYEENELAERNDIPEEDEMEKLEQKTLDTKRQMQISDALDELREKSARRSRVNIDDAIALLKEDAYGSIEEEESKKRKFEEEEIDREAKSLFSSQDGEIIRRLNAETTVEKELPKPIDLVSEKLATSNIPNFQPPKYAKRKMEKKKVLV</sequence>
<evidence type="ECO:0000255" key="1">
    <source>
        <dbReference type="HAMAP-Rule" id="MF_03226"/>
    </source>
</evidence>
<evidence type="ECO:0000256" key="2">
    <source>
        <dbReference type="SAM" id="MobiDB-lite"/>
    </source>
</evidence>
<evidence type="ECO:0000269" key="3">
    <source>
    </source>
</evidence>
<reference key="1">
    <citation type="journal article" date="2002" name="Nature">
        <title>The genome sequence of Schizosaccharomyces pombe.</title>
        <authorList>
            <person name="Wood V."/>
            <person name="Gwilliam R."/>
            <person name="Rajandream M.A."/>
            <person name="Lyne M.H."/>
            <person name="Lyne R."/>
            <person name="Stewart A."/>
            <person name="Sgouros J.G."/>
            <person name="Peat N."/>
            <person name="Hayles J."/>
            <person name="Baker S.G."/>
            <person name="Basham D."/>
            <person name="Bowman S."/>
            <person name="Brooks K."/>
            <person name="Brown D."/>
            <person name="Brown S."/>
            <person name="Chillingworth T."/>
            <person name="Churcher C.M."/>
            <person name="Collins M."/>
            <person name="Connor R."/>
            <person name="Cronin A."/>
            <person name="Davis P."/>
            <person name="Feltwell T."/>
            <person name="Fraser A."/>
            <person name="Gentles S."/>
            <person name="Goble A."/>
            <person name="Hamlin N."/>
            <person name="Harris D.E."/>
            <person name="Hidalgo J."/>
            <person name="Hodgson G."/>
            <person name="Holroyd S."/>
            <person name="Hornsby T."/>
            <person name="Howarth S."/>
            <person name="Huckle E.J."/>
            <person name="Hunt S."/>
            <person name="Jagels K."/>
            <person name="James K.D."/>
            <person name="Jones L."/>
            <person name="Jones M."/>
            <person name="Leather S."/>
            <person name="McDonald S."/>
            <person name="McLean J."/>
            <person name="Mooney P."/>
            <person name="Moule S."/>
            <person name="Mungall K.L."/>
            <person name="Murphy L.D."/>
            <person name="Niblett D."/>
            <person name="Odell C."/>
            <person name="Oliver K."/>
            <person name="O'Neil S."/>
            <person name="Pearson D."/>
            <person name="Quail M.A."/>
            <person name="Rabbinowitsch E."/>
            <person name="Rutherford K.M."/>
            <person name="Rutter S."/>
            <person name="Saunders D."/>
            <person name="Seeger K."/>
            <person name="Sharp S."/>
            <person name="Skelton J."/>
            <person name="Simmonds M.N."/>
            <person name="Squares R."/>
            <person name="Squares S."/>
            <person name="Stevens K."/>
            <person name="Taylor K."/>
            <person name="Taylor R.G."/>
            <person name="Tivey A."/>
            <person name="Walsh S.V."/>
            <person name="Warren T."/>
            <person name="Whitehead S."/>
            <person name="Woodward J.R."/>
            <person name="Volckaert G."/>
            <person name="Aert R."/>
            <person name="Robben J."/>
            <person name="Grymonprez B."/>
            <person name="Weltjens I."/>
            <person name="Vanstreels E."/>
            <person name="Rieger M."/>
            <person name="Schaefer M."/>
            <person name="Mueller-Auer S."/>
            <person name="Gabel C."/>
            <person name="Fuchs M."/>
            <person name="Duesterhoeft A."/>
            <person name="Fritzc C."/>
            <person name="Holzer E."/>
            <person name="Moestl D."/>
            <person name="Hilbert H."/>
            <person name="Borzym K."/>
            <person name="Langer I."/>
            <person name="Beck A."/>
            <person name="Lehrach H."/>
            <person name="Reinhardt R."/>
            <person name="Pohl T.M."/>
            <person name="Eger P."/>
            <person name="Zimmermann W."/>
            <person name="Wedler H."/>
            <person name="Wambutt R."/>
            <person name="Purnelle B."/>
            <person name="Goffeau A."/>
            <person name="Cadieu E."/>
            <person name="Dreano S."/>
            <person name="Gloux S."/>
            <person name="Lelaure V."/>
            <person name="Mottier S."/>
            <person name="Galibert F."/>
            <person name="Aves S.J."/>
            <person name="Xiang Z."/>
            <person name="Hunt C."/>
            <person name="Moore K."/>
            <person name="Hurst S.M."/>
            <person name="Lucas M."/>
            <person name="Rochet M."/>
            <person name="Gaillardin C."/>
            <person name="Tallada V.A."/>
            <person name="Garzon A."/>
            <person name="Thode G."/>
            <person name="Daga R.R."/>
            <person name="Cruzado L."/>
            <person name="Jimenez J."/>
            <person name="Sanchez M."/>
            <person name="del Rey F."/>
            <person name="Benito J."/>
            <person name="Dominguez A."/>
            <person name="Revuelta J.L."/>
            <person name="Moreno S."/>
            <person name="Armstrong J."/>
            <person name="Forsburg S.L."/>
            <person name="Cerutti L."/>
            <person name="Lowe T."/>
            <person name="McCombie W.R."/>
            <person name="Paulsen I."/>
            <person name="Potashkin J."/>
            <person name="Shpakovski G.V."/>
            <person name="Ussery D."/>
            <person name="Barrell B.G."/>
            <person name="Nurse P."/>
        </authorList>
    </citation>
    <scope>NUCLEOTIDE SEQUENCE [LARGE SCALE GENOMIC DNA]</scope>
    <source>
        <strain>972 / ATCC 24843</strain>
    </source>
</reference>
<reference key="2">
    <citation type="journal article" date="2002" name="Mol. Cell. Biol.">
        <title>Proteomics analysis reveals stable multiprotein complexes in both fission and budding yeasts containing Myb-related Cdc5p/Cef1p, novel pre-mRNA splicing factors, and snRNAs.</title>
        <authorList>
            <person name="Ohi M.D."/>
            <person name="Link A.J."/>
            <person name="Ren L."/>
            <person name="Jennings J.L."/>
            <person name="McDonald W.H."/>
            <person name="Gould K.L."/>
        </authorList>
    </citation>
    <scope>IDENTIFICATION IN THE CWF COMPLEX</scope>
    <scope>IDENTIFICATION BY MASS SPECTROMETRY</scope>
</reference>
<dbReference type="EMBL" id="CU329670">
    <property type="protein sequence ID" value="CAB57431.2"/>
    <property type="molecule type" value="Genomic_DNA"/>
</dbReference>
<dbReference type="PIR" id="T39198">
    <property type="entry name" value="T39198"/>
</dbReference>
<dbReference type="RefSeq" id="XP_001713052.1">
    <property type="nucleotide sequence ID" value="XM_001713000.2"/>
</dbReference>
<dbReference type="SMR" id="Q9P7C5"/>
<dbReference type="BioGRID" id="280619">
    <property type="interactions" value="35"/>
</dbReference>
<dbReference type="FunCoup" id="Q9P7C5">
    <property type="interactions" value="427"/>
</dbReference>
<dbReference type="IntAct" id="Q9P7C5">
    <property type="interactions" value="3"/>
</dbReference>
<dbReference type="STRING" id="284812.Q9P7C5"/>
<dbReference type="iPTMnet" id="Q9P7C5"/>
<dbReference type="PaxDb" id="4896-SPAC9.13c.1"/>
<dbReference type="EnsemblFungi" id="SPAC9.13c.1">
    <property type="protein sequence ID" value="SPAC9.13c.1:pep"/>
    <property type="gene ID" value="SPAC9.13c"/>
</dbReference>
<dbReference type="PomBase" id="SPAC9.13c">
    <property type="gene designation" value="cwf16"/>
</dbReference>
<dbReference type="VEuPathDB" id="FungiDB:SPAC9.13c"/>
<dbReference type="eggNOG" id="KOG2989">
    <property type="taxonomic scope" value="Eukaryota"/>
</dbReference>
<dbReference type="HOGENOM" id="CLU_053603_1_1_1"/>
<dbReference type="InParanoid" id="Q9P7C5"/>
<dbReference type="OMA" id="ENCDYQN"/>
<dbReference type="PhylomeDB" id="Q9P7C5"/>
<dbReference type="Reactome" id="R-SPO-72163">
    <property type="pathway name" value="mRNA Splicing - Major Pathway"/>
</dbReference>
<dbReference type="PRO" id="PR:Q9P7C5"/>
<dbReference type="Proteomes" id="UP000002485">
    <property type="component" value="Chromosome I"/>
</dbReference>
<dbReference type="GO" id="GO:0005634">
    <property type="term" value="C:nucleus"/>
    <property type="evidence" value="ECO:0007005"/>
    <property type="project" value="PomBase"/>
</dbReference>
<dbReference type="GO" id="GO:0000974">
    <property type="term" value="C:Prp19 complex"/>
    <property type="evidence" value="ECO:0000314"/>
    <property type="project" value="PomBase"/>
</dbReference>
<dbReference type="GO" id="GO:0005681">
    <property type="term" value="C:spliceosomal complex"/>
    <property type="evidence" value="ECO:0000314"/>
    <property type="project" value="PomBase"/>
</dbReference>
<dbReference type="GO" id="GO:0071006">
    <property type="term" value="C:U2-type catalytic step 1 spliceosome"/>
    <property type="evidence" value="ECO:0000318"/>
    <property type="project" value="GO_Central"/>
</dbReference>
<dbReference type="GO" id="GO:0005684">
    <property type="term" value="C:U2-type spliceosomal complex"/>
    <property type="evidence" value="ECO:0000314"/>
    <property type="project" value="PomBase"/>
</dbReference>
<dbReference type="GO" id="GO:0046872">
    <property type="term" value="F:metal ion binding"/>
    <property type="evidence" value="ECO:0007669"/>
    <property type="project" value="UniProtKB-KW"/>
</dbReference>
<dbReference type="GO" id="GO:0000349">
    <property type="term" value="P:generation of catalytic spliceosome for first transesterification step"/>
    <property type="evidence" value="ECO:0000266"/>
    <property type="project" value="PomBase"/>
</dbReference>
<dbReference type="GO" id="GO:0045292">
    <property type="term" value="P:mRNA cis splicing, via spliceosome"/>
    <property type="evidence" value="ECO:0000269"/>
    <property type="project" value="PomBase"/>
</dbReference>
<dbReference type="GO" id="GO:0008380">
    <property type="term" value="P:RNA splicing"/>
    <property type="evidence" value="ECO:0000318"/>
    <property type="project" value="GO_Central"/>
</dbReference>
<dbReference type="HAMAP" id="MF_03226">
    <property type="entry name" value="YJU2"/>
    <property type="match status" value="1"/>
</dbReference>
<dbReference type="InterPro" id="IPR007590">
    <property type="entry name" value="Saf4/Yju2"/>
</dbReference>
<dbReference type="InterPro" id="IPR043701">
    <property type="entry name" value="Yju2"/>
</dbReference>
<dbReference type="PANTHER" id="PTHR12111">
    <property type="entry name" value="SPLICING FACTOR YJU2"/>
    <property type="match status" value="1"/>
</dbReference>
<dbReference type="PANTHER" id="PTHR12111:SF1">
    <property type="entry name" value="SPLICING FACTOR YJU2"/>
    <property type="match status" value="1"/>
</dbReference>
<dbReference type="Pfam" id="PF04502">
    <property type="entry name" value="Saf4_Yju2"/>
    <property type="match status" value="1"/>
</dbReference>